<evidence type="ECO:0000255" key="1">
    <source>
        <dbReference type="HAMAP-Rule" id="MF_01350"/>
    </source>
</evidence>
<feature type="chain" id="PRO_1000067736" description="NADH-quinone oxidoreductase subunit H">
    <location>
        <begin position="1"/>
        <end position="355"/>
    </location>
</feature>
<feature type="transmembrane region" description="Helical" evidence="1">
    <location>
        <begin position="25"/>
        <end position="45"/>
    </location>
</feature>
<feature type="transmembrane region" description="Helical" evidence="1">
    <location>
        <begin position="91"/>
        <end position="111"/>
    </location>
</feature>
<feature type="transmembrane region" description="Helical" evidence="1">
    <location>
        <begin position="126"/>
        <end position="146"/>
    </location>
</feature>
<feature type="transmembrane region" description="Helical" evidence="1">
    <location>
        <begin position="170"/>
        <end position="190"/>
    </location>
</feature>
<feature type="transmembrane region" description="Helical" evidence="1">
    <location>
        <begin position="205"/>
        <end position="225"/>
    </location>
</feature>
<feature type="transmembrane region" description="Helical" evidence="1">
    <location>
        <begin position="253"/>
        <end position="273"/>
    </location>
</feature>
<feature type="transmembrane region" description="Helical" evidence="1">
    <location>
        <begin position="290"/>
        <end position="310"/>
    </location>
</feature>
<feature type="transmembrane region" description="Helical" evidence="1">
    <location>
        <begin position="330"/>
        <end position="350"/>
    </location>
</feature>
<sequence length="355" mass="39194">MSLFDTINAGGAQLLGVAWPTVWALVRILVVAVVILLCVAYLILWERKLIGWMHVRLGPNRVGPAGLLQPIADVLKLLLKEVIQPSAASRWLYLVAPVMTVVPAFAVWAVIPFQAQAVLANVNAGLLYAMAISSIGVYAVILAGWASNSKYAFLGAMRAAAQMVSYEISMGFALVLVLMTAGSLNLSEIVGSQQHGFFAGHGVNFLSWNWLPLLPAFVVYFVSGIAETNRHPFDVVEGESEIVAGHMIDYSGMAFALFFLAEYINMIVISALAATLFLGGWDAPFEFLSFIPGIFWLVLKVFALLSVFIWVRATFPRYRYDQIMRLGWKVFLPVTVIWVVVVGFWMMSPLNIWVK</sequence>
<proteinExistence type="inferred from homology"/>
<dbReference type="EC" id="7.1.1.-" evidence="1"/>
<dbReference type="EMBL" id="CP000614">
    <property type="protein sequence ID" value="ABO55326.1"/>
    <property type="molecule type" value="Genomic_DNA"/>
</dbReference>
<dbReference type="SMR" id="A4JGC3"/>
<dbReference type="KEGG" id="bvi:Bcep1808_2327"/>
<dbReference type="eggNOG" id="COG1005">
    <property type="taxonomic scope" value="Bacteria"/>
</dbReference>
<dbReference type="HOGENOM" id="CLU_015134_0_1_4"/>
<dbReference type="Proteomes" id="UP000002287">
    <property type="component" value="Chromosome 1"/>
</dbReference>
<dbReference type="GO" id="GO:0005886">
    <property type="term" value="C:plasma membrane"/>
    <property type="evidence" value="ECO:0007669"/>
    <property type="project" value="UniProtKB-SubCell"/>
</dbReference>
<dbReference type="GO" id="GO:0003954">
    <property type="term" value="F:NADH dehydrogenase activity"/>
    <property type="evidence" value="ECO:0007669"/>
    <property type="project" value="TreeGrafter"/>
</dbReference>
<dbReference type="GO" id="GO:0016655">
    <property type="term" value="F:oxidoreductase activity, acting on NAD(P)H, quinone or similar compound as acceptor"/>
    <property type="evidence" value="ECO:0007669"/>
    <property type="project" value="UniProtKB-UniRule"/>
</dbReference>
<dbReference type="GO" id="GO:0048038">
    <property type="term" value="F:quinone binding"/>
    <property type="evidence" value="ECO:0007669"/>
    <property type="project" value="UniProtKB-KW"/>
</dbReference>
<dbReference type="GO" id="GO:0009060">
    <property type="term" value="P:aerobic respiration"/>
    <property type="evidence" value="ECO:0007669"/>
    <property type="project" value="TreeGrafter"/>
</dbReference>
<dbReference type="HAMAP" id="MF_01350">
    <property type="entry name" value="NDH1_NuoH"/>
    <property type="match status" value="1"/>
</dbReference>
<dbReference type="InterPro" id="IPR001694">
    <property type="entry name" value="NADH_UbQ_OxRdtase_su1/FPO"/>
</dbReference>
<dbReference type="InterPro" id="IPR018086">
    <property type="entry name" value="NADH_UbQ_OxRdtase_su1_CS"/>
</dbReference>
<dbReference type="NCBIfam" id="NF004741">
    <property type="entry name" value="PRK06076.1-2"/>
    <property type="match status" value="1"/>
</dbReference>
<dbReference type="NCBIfam" id="NF004742">
    <property type="entry name" value="PRK06076.1-3"/>
    <property type="match status" value="1"/>
</dbReference>
<dbReference type="PANTHER" id="PTHR11432">
    <property type="entry name" value="NADH DEHYDROGENASE SUBUNIT 1"/>
    <property type="match status" value="1"/>
</dbReference>
<dbReference type="PANTHER" id="PTHR11432:SF3">
    <property type="entry name" value="NADH-UBIQUINONE OXIDOREDUCTASE CHAIN 1"/>
    <property type="match status" value="1"/>
</dbReference>
<dbReference type="Pfam" id="PF00146">
    <property type="entry name" value="NADHdh"/>
    <property type="match status" value="1"/>
</dbReference>
<dbReference type="PROSITE" id="PS00668">
    <property type="entry name" value="COMPLEX1_ND1_2"/>
    <property type="match status" value="1"/>
</dbReference>
<reference key="1">
    <citation type="submission" date="2007-03" db="EMBL/GenBank/DDBJ databases">
        <title>Complete sequence of chromosome 1 of Burkholderia vietnamiensis G4.</title>
        <authorList>
            <consortium name="US DOE Joint Genome Institute"/>
            <person name="Copeland A."/>
            <person name="Lucas S."/>
            <person name="Lapidus A."/>
            <person name="Barry K."/>
            <person name="Detter J.C."/>
            <person name="Glavina del Rio T."/>
            <person name="Hammon N."/>
            <person name="Israni S."/>
            <person name="Dalin E."/>
            <person name="Tice H."/>
            <person name="Pitluck S."/>
            <person name="Chain P."/>
            <person name="Malfatti S."/>
            <person name="Shin M."/>
            <person name="Vergez L."/>
            <person name="Schmutz J."/>
            <person name="Larimer F."/>
            <person name="Land M."/>
            <person name="Hauser L."/>
            <person name="Kyrpides N."/>
            <person name="Tiedje J."/>
            <person name="Richardson P."/>
        </authorList>
    </citation>
    <scope>NUCLEOTIDE SEQUENCE [LARGE SCALE GENOMIC DNA]</scope>
    <source>
        <strain>G4 / LMG 22486</strain>
    </source>
</reference>
<keyword id="KW-0997">Cell inner membrane</keyword>
<keyword id="KW-1003">Cell membrane</keyword>
<keyword id="KW-0472">Membrane</keyword>
<keyword id="KW-0520">NAD</keyword>
<keyword id="KW-0874">Quinone</keyword>
<keyword id="KW-1278">Translocase</keyword>
<keyword id="KW-0812">Transmembrane</keyword>
<keyword id="KW-1133">Transmembrane helix</keyword>
<keyword id="KW-0830">Ubiquinone</keyword>
<name>NUOH_BURVG</name>
<organism>
    <name type="scientific">Burkholderia vietnamiensis (strain G4 / LMG 22486)</name>
    <name type="common">Burkholderia cepacia (strain R1808)</name>
    <dbReference type="NCBI Taxonomy" id="269482"/>
    <lineage>
        <taxon>Bacteria</taxon>
        <taxon>Pseudomonadati</taxon>
        <taxon>Pseudomonadota</taxon>
        <taxon>Betaproteobacteria</taxon>
        <taxon>Burkholderiales</taxon>
        <taxon>Burkholderiaceae</taxon>
        <taxon>Burkholderia</taxon>
        <taxon>Burkholderia cepacia complex</taxon>
    </lineage>
</organism>
<protein>
    <recommendedName>
        <fullName evidence="1">NADH-quinone oxidoreductase subunit H</fullName>
        <ecNumber evidence="1">7.1.1.-</ecNumber>
    </recommendedName>
    <alternativeName>
        <fullName evidence="1">NADH dehydrogenase I subunit H</fullName>
    </alternativeName>
    <alternativeName>
        <fullName evidence="1">NDH-1 subunit H</fullName>
    </alternativeName>
</protein>
<comment type="function">
    <text evidence="1">NDH-1 shuttles electrons from NADH, via FMN and iron-sulfur (Fe-S) centers, to quinones in the respiratory chain. The immediate electron acceptor for the enzyme in this species is believed to be ubiquinone. Couples the redox reaction to proton translocation (for every two electrons transferred, four hydrogen ions are translocated across the cytoplasmic membrane), and thus conserves the redox energy in a proton gradient. This subunit may bind ubiquinone.</text>
</comment>
<comment type="catalytic activity">
    <reaction evidence="1">
        <text>a quinone + NADH + 5 H(+)(in) = a quinol + NAD(+) + 4 H(+)(out)</text>
        <dbReference type="Rhea" id="RHEA:57888"/>
        <dbReference type="ChEBI" id="CHEBI:15378"/>
        <dbReference type="ChEBI" id="CHEBI:24646"/>
        <dbReference type="ChEBI" id="CHEBI:57540"/>
        <dbReference type="ChEBI" id="CHEBI:57945"/>
        <dbReference type="ChEBI" id="CHEBI:132124"/>
    </reaction>
</comment>
<comment type="subunit">
    <text evidence="1">NDH-1 is composed of 14 different subunits. Subunits NuoA, H, J, K, L, M, N constitute the membrane sector of the complex.</text>
</comment>
<comment type="subcellular location">
    <subcellularLocation>
        <location evidence="1">Cell inner membrane</location>
        <topology evidence="1">Multi-pass membrane protein</topology>
    </subcellularLocation>
</comment>
<comment type="similarity">
    <text evidence="1">Belongs to the complex I subunit 1 family.</text>
</comment>
<gene>
    <name evidence="1" type="primary">nuoH</name>
    <name type="ordered locus">Bcep1808_2327</name>
</gene>
<accession>A4JGC3</accession>